<accession>P01431</accession>
<feature type="chain" id="PRO_0000093603" description="Short neurotoxin 1" evidence="4">
    <location>
        <begin position="1"/>
        <end position="62"/>
    </location>
</feature>
<feature type="region of interest" description="Disordered" evidence="3">
    <location>
        <begin position="1"/>
        <end position="20"/>
    </location>
</feature>
<feature type="disulfide bond" evidence="1">
    <location>
        <begin position="3"/>
        <end position="24"/>
    </location>
</feature>
<feature type="disulfide bond" evidence="1">
    <location>
        <begin position="17"/>
        <end position="41"/>
    </location>
</feature>
<feature type="disulfide bond" evidence="1">
    <location>
        <begin position="43"/>
        <end position="54"/>
    </location>
</feature>
<feature type="disulfide bond" evidence="1">
    <location>
        <begin position="55"/>
        <end position="60"/>
    </location>
</feature>
<name>3S11_NAJMO</name>
<sequence length="62" mass="7081">LECHNQQSSEPPTTTRCSGGETNCYKKRWRDHRGYRTERGCGCPTVKKGIELNCCTTDRCNN</sequence>
<comment type="function">
    <text evidence="2">Binds to muscle nicotinic acetylcholine receptor (nAChR) and inhibit acetylcholine from binding to the receptor, thereby impairing neuromuscular transmission.</text>
</comment>
<comment type="subcellular location">
    <subcellularLocation>
        <location evidence="4">Secreted</location>
    </subcellularLocation>
</comment>
<comment type="tissue specificity">
    <text evidence="5">Expressed by the venom gland.</text>
</comment>
<comment type="toxic dose">
    <text evidence="4">LD(50) is 0.04 mg/kg by subcutaneous injection.</text>
</comment>
<comment type="similarity">
    <text evidence="5">Belongs to the three-finger toxin family. Short-chain subfamily. Type I alpha-neurotoxin sub-subfamily.</text>
</comment>
<organism>
    <name type="scientific">Naja mossambica</name>
    <name type="common">Mozambique spitting cobra</name>
    <dbReference type="NCBI Taxonomy" id="8644"/>
    <lineage>
        <taxon>Eukaryota</taxon>
        <taxon>Metazoa</taxon>
        <taxon>Chordata</taxon>
        <taxon>Craniata</taxon>
        <taxon>Vertebrata</taxon>
        <taxon>Euteleostomi</taxon>
        <taxon>Lepidosauria</taxon>
        <taxon>Squamata</taxon>
        <taxon>Bifurcata</taxon>
        <taxon>Unidentata</taxon>
        <taxon>Episquamata</taxon>
        <taxon>Toxicofera</taxon>
        <taxon>Serpentes</taxon>
        <taxon>Colubroidea</taxon>
        <taxon>Elapidae</taxon>
        <taxon>Elapinae</taxon>
        <taxon>Naja</taxon>
    </lineage>
</organism>
<evidence type="ECO:0000250" key="1">
    <source>
        <dbReference type="UniProtKB" id="P0C1Z0"/>
    </source>
</evidence>
<evidence type="ECO:0000250" key="2">
    <source>
        <dbReference type="UniProtKB" id="P60775"/>
    </source>
</evidence>
<evidence type="ECO:0000256" key="3">
    <source>
        <dbReference type="SAM" id="MobiDB-lite"/>
    </source>
</evidence>
<evidence type="ECO:0000269" key="4">
    <source>
    </source>
</evidence>
<evidence type="ECO:0000305" key="5"/>
<proteinExistence type="evidence at protein level"/>
<reference key="1">
    <citation type="journal article" date="1977" name="Eur. J. Biochem.">
        <title>Amino acid sequences of neurotoxins I and III of the elapidae snake Naja mossambica massambica.</title>
        <authorList>
            <person name="Gregoire J."/>
            <person name="Rochat H."/>
        </authorList>
    </citation>
    <scope>PROTEIN SEQUENCE</scope>
    <scope>TOXIC DOSE</scope>
    <scope>SUBCELLULAR LOCATION</scope>
    <source>
        <tissue>Venom</tissue>
    </source>
</reference>
<protein>
    <recommendedName>
        <fullName>Short neurotoxin 1</fullName>
    </recommendedName>
    <alternativeName>
        <fullName>NMM I</fullName>
    </alternativeName>
    <alternativeName>
        <fullName>Neurotoxin I</fullName>
    </alternativeName>
</protein>
<dbReference type="PIR" id="A01699">
    <property type="entry name" value="N1NJ1M"/>
</dbReference>
<dbReference type="SMR" id="P01431"/>
<dbReference type="GO" id="GO:0005576">
    <property type="term" value="C:extracellular region"/>
    <property type="evidence" value="ECO:0007669"/>
    <property type="project" value="UniProtKB-SubCell"/>
</dbReference>
<dbReference type="GO" id="GO:0030550">
    <property type="term" value="F:acetylcholine receptor inhibitor activity"/>
    <property type="evidence" value="ECO:0007669"/>
    <property type="project" value="UniProtKB-KW"/>
</dbReference>
<dbReference type="GO" id="GO:0099106">
    <property type="term" value="F:ion channel regulator activity"/>
    <property type="evidence" value="ECO:0007669"/>
    <property type="project" value="UniProtKB-KW"/>
</dbReference>
<dbReference type="GO" id="GO:0090729">
    <property type="term" value="F:toxin activity"/>
    <property type="evidence" value="ECO:0007669"/>
    <property type="project" value="UniProtKB-KW"/>
</dbReference>
<dbReference type="CDD" id="cd00206">
    <property type="entry name" value="TFP_snake_toxin"/>
    <property type="match status" value="1"/>
</dbReference>
<dbReference type="FunFam" id="2.10.60.10:FF:000024">
    <property type="entry name" value="Cytotoxin 1"/>
    <property type="match status" value="1"/>
</dbReference>
<dbReference type="Gene3D" id="2.10.60.10">
    <property type="entry name" value="CD59"/>
    <property type="match status" value="1"/>
</dbReference>
<dbReference type="InterPro" id="IPR003571">
    <property type="entry name" value="Snake_3FTx"/>
</dbReference>
<dbReference type="InterPro" id="IPR045860">
    <property type="entry name" value="Snake_toxin-like_sf"/>
</dbReference>
<dbReference type="InterPro" id="IPR018354">
    <property type="entry name" value="Snake_toxin_con_site"/>
</dbReference>
<dbReference type="InterPro" id="IPR054131">
    <property type="entry name" value="Toxin_cobra-type"/>
</dbReference>
<dbReference type="Pfam" id="PF21947">
    <property type="entry name" value="Toxin_cobra-type"/>
    <property type="match status" value="1"/>
</dbReference>
<dbReference type="SUPFAM" id="SSF57302">
    <property type="entry name" value="Snake toxin-like"/>
    <property type="match status" value="1"/>
</dbReference>
<dbReference type="PROSITE" id="PS00272">
    <property type="entry name" value="SNAKE_TOXIN"/>
    <property type="match status" value="1"/>
</dbReference>
<keyword id="KW-0008">Acetylcholine receptor inhibiting toxin</keyword>
<keyword id="KW-0903">Direct protein sequencing</keyword>
<keyword id="KW-1015">Disulfide bond</keyword>
<keyword id="KW-0872">Ion channel impairing toxin</keyword>
<keyword id="KW-0528">Neurotoxin</keyword>
<keyword id="KW-0629">Postsynaptic neurotoxin</keyword>
<keyword id="KW-0964">Secreted</keyword>
<keyword id="KW-0800">Toxin</keyword>